<protein>
    <recommendedName>
        <fullName evidence="1">Succinyl-diaminopimelate desuccinylase</fullName>
        <shortName evidence="1">SDAP desuccinylase</shortName>
        <ecNumber evidence="1">3.5.1.18</ecNumber>
    </recommendedName>
    <alternativeName>
        <fullName evidence="1">N-succinyl-LL-2,6-diaminoheptanedioate amidohydrolase</fullName>
    </alternativeName>
</protein>
<feature type="chain" id="PRO_0000375496" description="Succinyl-diaminopimelate desuccinylase">
    <location>
        <begin position="1"/>
        <end position="379"/>
    </location>
</feature>
<feature type="active site" evidence="1">
    <location>
        <position position="72"/>
    </location>
</feature>
<feature type="active site" description="Proton acceptor" evidence="1">
    <location>
        <position position="137"/>
    </location>
</feature>
<feature type="binding site" evidence="1">
    <location>
        <position position="70"/>
    </location>
    <ligand>
        <name>Zn(2+)</name>
        <dbReference type="ChEBI" id="CHEBI:29105"/>
        <label>1</label>
    </ligand>
</feature>
<feature type="binding site" evidence="1">
    <location>
        <position position="103"/>
    </location>
    <ligand>
        <name>Zn(2+)</name>
        <dbReference type="ChEBI" id="CHEBI:29105"/>
        <label>1</label>
    </ligand>
</feature>
<feature type="binding site" evidence="1">
    <location>
        <position position="103"/>
    </location>
    <ligand>
        <name>Zn(2+)</name>
        <dbReference type="ChEBI" id="CHEBI:29105"/>
        <label>2</label>
    </ligand>
</feature>
<feature type="binding site" evidence="1">
    <location>
        <position position="138"/>
    </location>
    <ligand>
        <name>Zn(2+)</name>
        <dbReference type="ChEBI" id="CHEBI:29105"/>
        <label>2</label>
    </ligand>
</feature>
<feature type="binding site" evidence="1">
    <location>
        <position position="166"/>
    </location>
    <ligand>
        <name>Zn(2+)</name>
        <dbReference type="ChEBI" id="CHEBI:29105"/>
        <label>1</label>
    </ligand>
</feature>
<feature type="binding site" evidence="1">
    <location>
        <position position="352"/>
    </location>
    <ligand>
        <name>Zn(2+)</name>
        <dbReference type="ChEBI" id="CHEBI:29105"/>
        <label>2</label>
    </ligand>
</feature>
<keyword id="KW-0028">Amino-acid biosynthesis</keyword>
<keyword id="KW-0170">Cobalt</keyword>
<keyword id="KW-0220">Diaminopimelate biosynthesis</keyword>
<keyword id="KW-0378">Hydrolase</keyword>
<keyword id="KW-0457">Lysine biosynthesis</keyword>
<keyword id="KW-0479">Metal-binding</keyword>
<keyword id="KW-0862">Zinc</keyword>
<dbReference type="EC" id="3.5.1.18" evidence="1"/>
<dbReference type="EMBL" id="CP001025">
    <property type="protein sequence ID" value="ACB64415.1"/>
    <property type="molecule type" value="Genomic_DNA"/>
</dbReference>
<dbReference type="RefSeq" id="WP_012364143.1">
    <property type="nucleotide sequence ID" value="NC_010551.1"/>
</dbReference>
<dbReference type="SMR" id="B1YSH9"/>
<dbReference type="KEGG" id="bac:BamMC406_1933"/>
<dbReference type="HOGENOM" id="CLU_021802_4_0_4"/>
<dbReference type="OrthoDB" id="9809784at2"/>
<dbReference type="UniPathway" id="UPA00034">
    <property type="reaction ID" value="UER00021"/>
</dbReference>
<dbReference type="Proteomes" id="UP000001680">
    <property type="component" value="Chromosome 1"/>
</dbReference>
<dbReference type="GO" id="GO:0008777">
    <property type="term" value="F:acetylornithine deacetylase activity"/>
    <property type="evidence" value="ECO:0007669"/>
    <property type="project" value="TreeGrafter"/>
</dbReference>
<dbReference type="GO" id="GO:0050897">
    <property type="term" value="F:cobalt ion binding"/>
    <property type="evidence" value="ECO:0007669"/>
    <property type="project" value="UniProtKB-UniRule"/>
</dbReference>
<dbReference type="GO" id="GO:0009014">
    <property type="term" value="F:succinyl-diaminopimelate desuccinylase activity"/>
    <property type="evidence" value="ECO:0007669"/>
    <property type="project" value="UniProtKB-UniRule"/>
</dbReference>
<dbReference type="GO" id="GO:0008270">
    <property type="term" value="F:zinc ion binding"/>
    <property type="evidence" value="ECO:0007669"/>
    <property type="project" value="UniProtKB-UniRule"/>
</dbReference>
<dbReference type="GO" id="GO:0019877">
    <property type="term" value="P:diaminopimelate biosynthetic process"/>
    <property type="evidence" value="ECO:0007669"/>
    <property type="project" value="UniProtKB-UniRule"/>
</dbReference>
<dbReference type="GO" id="GO:0006526">
    <property type="term" value="P:L-arginine biosynthetic process"/>
    <property type="evidence" value="ECO:0007669"/>
    <property type="project" value="TreeGrafter"/>
</dbReference>
<dbReference type="GO" id="GO:0009089">
    <property type="term" value="P:lysine biosynthetic process via diaminopimelate"/>
    <property type="evidence" value="ECO:0007669"/>
    <property type="project" value="UniProtKB-UniRule"/>
</dbReference>
<dbReference type="CDD" id="cd03891">
    <property type="entry name" value="M20_DapE_proteobac"/>
    <property type="match status" value="1"/>
</dbReference>
<dbReference type="FunFam" id="3.30.70.360:FF:000011">
    <property type="entry name" value="Succinyl-diaminopimelate desuccinylase"/>
    <property type="match status" value="1"/>
</dbReference>
<dbReference type="FunFam" id="3.40.630.10:FF:000005">
    <property type="entry name" value="Succinyl-diaminopimelate desuccinylase"/>
    <property type="match status" value="1"/>
</dbReference>
<dbReference type="Gene3D" id="3.40.630.10">
    <property type="entry name" value="Zn peptidases"/>
    <property type="match status" value="2"/>
</dbReference>
<dbReference type="HAMAP" id="MF_01690">
    <property type="entry name" value="DapE"/>
    <property type="match status" value="1"/>
</dbReference>
<dbReference type="InterPro" id="IPR001261">
    <property type="entry name" value="ArgE/DapE_CS"/>
</dbReference>
<dbReference type="InterPro" id="IPR036264">
    <property type="entry name" value="Bact_exopeptidase_dim_dom"/>
</dbReference>
<dbReference type="InterPro" id="IPR005941">
    <property type="entry name" value="DapE_proteobac"/>
</dbReference>
<dbReference type="InterPro" id="IPR002933">
    <property type="entry name" value="Peptidase_M20"/>
</dbReference>
<dbReference type="InterPro" id="IPR011650">
    <property type="entry name" value="Peptidase_M20_dimer"/>
</dbReference>
<dbReference type="InterPro" id="IPR050072">
    <property type="entry name" value="Peptidase_M20A"/>
</dbReference>
<dbReference type="NCBIfam" id="TIGR01246">
    <property type="entry name" value="dapE_proteo"/>
    <property type="match status" value="1"/>
</dbReference>
<dbReference type="NCBIfam" id="NF009557">
    <property type="entry name" value="PRK13009.1"/>
    <property type="match status" value="1"/>
</dbReference>
<dbReference type="PANTHER" id="PTHR43808">
    <property type="entry name" value="ACETYLORNITHINE DEACETYLASE"/>
    <property type="match status" value="1"/>
</dbReference>
<dbReference type="PANTHER" id="PTHR43808:SF31">
    <property type="entry name" value="N-ACETYL-L-CITRULLINE DEACETYLASE"/>
    <property type="match status" value="1"/>
</dbReference>
<dbReference type="Pfam" id="PF07687">
    <property type="entry name" value="M20_dimer"/>
    <property type="match status" value="1"/>
</dbReference>
<dbReference type="Pfam" id="PF01546">
    <property type="entry name" value="Peptidase_M20"/>
    <property type="match status" value="1"/>
</dbReference>
<dbReference type="SUPFAM" id="SSF55031">
    <property type="entry name" value="Bacterial exopeptidase dimerisation domain"/>
    <property type="match status" value="1"/>
</dbReference>
<dbReference type="SUPFAM" id="SSF53187">
    <property type="entry name" value="Zn-dependent exopeptidases"/>
    <property type="match status" value="1"/>
</dbReference>
<dbReference type="PROSITE" id="PS00758">
    <property type="entry name" value="ARGE_DAPE_CPG2_1"/>
    <property type="match status" value="1"/>
</dbReference>
<name>DAPE_BURA4</name>
<accession>B1YSH9</accession>
<proteinExistence type="inferred from homology"/>
<evidence type="ECO:0000255" key="1">
    <source>
        <dbReference type="HAMAP-Rule" id="MF_01690"/>
    </source>
</evidence>
<gene>
    <name evidence="1" type="primary">dapE</name>
    <name type="ordered locus">BamMC406_1933</name>
</gene>
<comment type="function">
    <text evidence="1">Catalyzes the hydrolysis of N-succinyl-L,L-diaminopimelic acid (SDAP), forming succinate and LL-2,6-diaminopimelate (DAP), an intermediate involved in the bacterial biosynthesis of lysine and meso-diaminopimelic acid, an essential component of bacterial cell walls.</text>
</comment>
<comment type="catalytic activity">
    <reaction evidence="1">
        <text>N-succinyl-(2S,6S)-2,6-diaminopimelate + H2O = (2S,6S)-2,6-diaminopimelate + succinate</text>
        <dbReference type="Rhea" id="RHEA:22608"/>
        <dbReference type="ChEBI" id="CHEBI:15377"/>
        <dbReference type="ChEBI" id="CHEBI:30031"/>
        <dbReference type="ChEBI" id="CHEBI:57609"/>
        <dbReference type="ChEBI" id="CHEBI:58087"/>
        <dbReference type="EC" id="3.5.1.18"/>
    </reaction>
</comment>
<comment type="cofactor">
    <cofactor evidence="1">
        <name>Zn(2+)</name>
        <dbReference type="ChEBI" id="CHEBI:29105"/>
    </cofactor>
    <cofactor evidence="1">
        <name>Co(2+)</name>
        <dbReference type="ChEBI" id="CHEBI:48828"/>
    </cofactor>
    <text evidence="1">Binds 2 Zn(2+) or Co(2+) ions per subunit.</text>
</comment>
<comment type="pathway">
    <text evidence="1">Amino-acid biosynthesis; L-lysine biosynthesis via DAP pathway; LL-2,6-diaminopimelate from (S)-tetrahydrodipicolinate (succinylase route): step 3/3.</text>
</comment>
<comment type="subunit">
    <text evidence="1">Homodimer.</text>
</comment>
<comment type="similarity">
    <text evidence="1">Belongs to the peptidase M20A family. DapE subfamily.</text>
</comment>
<reference key="1">
    <citation type="submission" date="2008-04" db="EMBL/GenBank/DDBJ databases">
        <title>Complete sequence of chromosome 1 of Burkholderia ambifaria MC40-6.</title>
        <authorList>
            <person name="Copeland A."/>
            <person name="Lucas S."/>
            <person name="Lapidus A."/>
            <person name="Glavina del Rio T."/>
            <person name="Dalin E."/>
            <person name="Tice H."/>
            <person name="Pitluck S."/>
            <person name="Chain P."/>
            <person name="Malfatti S."/>
            <person name="Shin M."/>
            <person name="Vergez L."/>
            <person name="Lang D."/>
            <person name="Schmutz J."/>
            <person name="Larimer F."/>
            <person name="Land M."/>
            <person name="Hauser L."/>
            <person name="Kyrpides N."/>
            <person name="Lykidis A."/>
            <person name="Ramette A."/>
            <person name="Konstantinidis K."/>
            <person name="Tiedje J."/>
            <person name="Richardson P."/>
        </authorList>
    </citation>
    <scope>NUCLEOTIDE SEQUENCE [LARGE SCALE GENOMIC DNA]</scope>
    <source>
        <strain>MC40-6</strain>
    </source>
</reference>
<organism>
    <name type="scientific">Burkholderia ambifaria (strain MC40-6)</name>
    <dbReference type="NCBI Taxonomy" id="398577"/>
    <lineage>
        <taxon>Bacteria</taxon>
        <taxon>Pseudomonadati</taxon>
        <taxon>Pseudomonadota</taxon>
        <taxon>Betaproteobacteria</taxon>
        <taxon>Burkholderiales</taxon>
        <taxon>Burkholderiaceae</taxon>
        <taxon>Burkholderia</taxon>
        <taxon>Burkholderia cepacia complex</taxon>
    </lineage>
</organism>
<sequence length="379" mass="40706">MSATLALTEQLIARASVTPDDQHCQQIMTERLAALGFECETIASHGVTNLWAVKRGADGRDGKLLAFAGHTDVVPTGPLEQWTSPPFVPAHRDGKLYGRGAADMKTSLAAFVVASEEFVAAHPGHRGAIAFLITSDEEGPATDGTVKVVELLEARGERVDYCIVGEPTSTAELGDVVKNGRRGSMSGELVVKGVQGHIAYPHLAKNPIHLLAPALAELAAEQWDAGNEYFPPTTWQVSNLHAGTGATNVIPGHADLMFNFRFSTASTVEGLQARVHAILDKHGLEYTLKWSVSGLPFLTPRGDLSNALENAIRAETGLTTELSTTGGTSDGRFIARICPQVIEFGPPNGSIHKIDEHIDVRFVDPLKNVYRRVLEQLIA</sequence>